<protein>
    <recommendedName>
        <fullName evidence="8">Small conductance calcium-activated potassium channel protein 1</fullName>
        <shortName>SK1</shortName>
        <shortName>SKCa 1</shortName>
        <shortName>SKCa1</shortName>
    </recommendedName>
    <alternativeName>
        <fullName>KCa2.1</fullName>
    </alternativeName>
</protein>
<sequence>MSSRSHNGSVGRPLGSGPGFLGWEPVDPEAGRPRQPTQGPGLQMMAKGQPAGLSPSGPRGHSQAQEEEEEEEDEDRPGSGKPPTVSHRLGHRRALFEKRKRLSDYALIFGMFGIVVMVTETELSWGVYTKESLCSFALKCLISLSTVILLGLVILYHAREIQLFLVDNGADDWRIAMTWERVSLISLELAVCAIHPVPGHYRFTWTARLAFSLVPSAAEADVDVLLSIPMFLRLYLLARVMLLHSRIFTDASSRSIGALNRVTFNTRFVTKTLMTICPGTVLLVFSISSWIVAAWTVRVCERYHDKQEVTSNFLGAMWLISITFLSIGYGDMVPHTYCGKGVCLLTGIMGAGCTALVVAVVARKLELTKAEKHVHNFMMDTQLTKRVKNAAANVLRETWLIYKHTRLVKKPDQSRVRKHQRKFLQAIHQAQKLRTVKIEQGKVNDQANTLADLAKAQSIAYEVVSELQAQQEELEARLAALESRLDVLGASLQALPSLIAQAICPLPPPWPGPSHLTTAAQSPQSHWLPTTASDCG</sequence>
<keyword id="KW-0112">Calmodulin-binding</keyword>
<keyword id="KW-0963">Cytoplasm</keyword>
<keyword id="KW-0407">Ion channel</keyword>
<keyword id="KW-0406">Ion transport</keyword>
<keyword id="KW-0472">Membrane</keyword>
<keyword id="KW-1185">Reference proteome</keyword>
<keyword id="KW-0812">Transmembrane</keyword>
<keyword id="KW-1133">Transmembrane helix</keyword>
<keyword id="KW-0813">Transport</keyword>
<reference key="1">
    <citation type="journal article" date="1997" name="Proc. Natl. Acad. Sci. U.S.A.">
        <title>hSK4, a member of a novel subfamily of calcium-activated potassium channels.</title>
        <authorList>
            <person name="Joiner W.J."/>
            <person name="Wang L.-Y."/>
            <person name="Tang M.D."/>
            <person name="Kaczmarek L.K."/>
        </authorList>
    </citation>
    <scope>NUCLEOTIDE SEQUENCE [MRNA]</scope>
    <source>
        <tissue>Brain</tissue>
    </source>
</reference>
<reference key="2">
    <citation type="journal article" date="1996" name="Science">
        <title>Small-conductance, calcium-activated potassium channels from mammalian brain.</title>
        <authorList>
            <person name="Koehler M."/>
            <person name="Hirschberg B."/>
            <person name="Bond C.T."/>
            <person name="Kinzie J.M."/>
            <person name="Marrion N.V."/>
            <person name="Maylie J."/>
            <person name="Adelman J.P."/>
        </authorList>
    </citation>
    <scope>NUCLEOTIDE SEQUENCE [MRNA] OF 79-536</scope>
    <scope>TISSUE SPECIFICITY</scope>
    <source>
        <strain>Sprague-Dawley</strain>
        <tissue>Brain</tissue>
    </source>
</reference>
<reference key="3">
    <citation type="journal article" date="2006" name="Proc. Natl. Acad. Sci. U.S.A.">
        <title>Quantitative phosphoproteomics of vasopressin-sensitive renal cells: regulation of aquaporin-2 phosphorylation at two sites.</title>
        <authorList>
            <person name="Hoffert J.D."/>
            <person name="Pisitkun T."/>
            <person name="Wang G."/>
            <person name="Shen R.-F."/>
            <person name="Knepper M.A."/>
        </authorList>
    </citation>
    <scope>IDENTIFICATION BY MASS SPECTROMETRY [LARGE SCALE ANALYSIS]</scope>
</reference>
<comment type="function">
    <text evidence="3 4">Small conductance calcium-activated potassium channel that mediates the voltage-independent transmembrane transfer of potassium across the cell membrane through a constitutive interaction with calmodulin which binds the intracellular calcium allowing its opening (By similarity). The current is characterized by a voltage-independent activation, an intracellular calcium concentration increase-dependent activation and a single-channel conductance of about 3 picosiemens (By similarity). Also presents an inwardly rectifying current, thus reducing its already small outward conductance of potassium ions, which is particularly the case when the membrane potential displays positive values, above + 20 mV (By similarity). Activation is followed by membrane hyperpolarization (By similarity). Thought to regulate neuronal excitability by contributing to the slow component of synaptic afterhyperpolarization (By similarity).</text>
</comment>
<comment type="catalytic activity">
    <reaction evidence="4">
        <text>K(+)(in) = K(+)(out)</text>
        <dbReference type="Rhea" id="RHEA:29463"/>
        <dbReference type="ChEBI" id="CHEBI:29103"/>
    </reaction>
</comment>
<comment type="activity regulation">
    <text evidence="3">Inhibited by bee venom neurotoxin apamin. Inhibited by d-tubocurarine and tetraethylammonium (TEA).</text>
</comment>
<comment type="subunit">
    <text evidence="2 3 4">Homodimer (By similarity). Heteromultimer with KCNN2 and KCNN3 (By similarity). The complex is composed of 4 channel subunits each of which binds to a calmodulin subunit which regulates the channel activity through calcium-binding (By similarity). Interacts with calmodulin (By similarity).</text>
</comment>
<comment type="subcellular location">
    <subcellularLocation>
        <location evidence="5">Membrane</location>
        <topology evidence="5">Multi-pass membrane protein</topology>
    </subcellularLocation>
    <subcellularLocation>
        <location evidence="4">Cytoplasm</location>
        <location evidence="4">Myofibril</location>
        <location evidence="4">Sarcomere</location>
        <location evidence="4">Z line</location>
    </subcellularLocation>
</comment>
<comment type="tissue specificity">
    <text evidence="7">Widely expressed including brain.</text>
</comment>
<comment type="domain">
    <text evidence="3">The coiled-coil domaim mediates heteromeic assembly.</text>
</comment>
<comment type="similarity">
    <text evidence="8">Belongs to the potassium channel KCNN family. KCa2.1/KCNN1 subfamily.</text>
</comment>
<dbReference type="EMBL" id="AF000973">
    <property type="protein sequence ID" value="AAB82740.1"/>
    <property type="molecule type" value="mRNA"/>
</dbReference>
<dbReference type="EMBL" id="U69885">
    <property type="protein sequence ID" value="AAB09564.1"/>
    <property type="molecule type" value="mRNA"/>
</dbReference>
<dbReference type="RefSeq" id="NP_062186.1">
    <property type="nucleotide sequence ID" value="NM_019313.2"/>
</dbReference>
<dbReference type="RefSeq" id="XP_017455721.1">
    <property type="nucleotide sequence ID" value="XM_017600232.1"/>
</dbReference>
<dbReference type="SMR" id="P70606"/>
<dbReference type="FunCoup" id="P70606">
    <property type="interactions" value="327"/>
</dbReference>
<dbReference type="IntAct" id="P70606">
    <property type="interactions" value="1"/>
</dbReference>
<dbReference type="MINT" id="P70606"/>
<dbReference type="STRING" id="10116.ENSRNOP00000042517"/>
<dbReference type="BindingDB" id="P70606"/>
<dbReference type="ChEMBL" id="CHEMBL3743"/>
<dbReference type="iPTMnet" id="P70606"/>
<dbReference type="PhosphoSitePlus" id="P70606"/>
<dbReference type="PaxDb" id="10116-ENSRNOP00000042517"/>
<dbReference type="GeneID" id="54261"/>
<dbReference type="KEGG" id="rno:54261"/>
<dbReference type="AGR" id="RGD:2962"/>
<dbReference type="CTD" id="3780"/>
<dbReference type="RGD" id="2962">
    <property type="gene designation" value="Kcnn1"/>
</dbReference>
<dbReference type="VEuPathDB" id="HostDB:ENSRNOG00000029264"/>
<dbReference type="eggNOG" id="KOG3684">
    <property type="taxonomic scope" value="Eukaryota"/>
</dbReference>
<dbReference type="InParanoid" id="P70606"/>
<dbReference type="OrthoDB" id="69074at9989"/>
<dbReference type="PhylomeDB" id="P70606"/>
<dbReference type="Reactome" id="R-RNO-1296052">
    <property type="pathway name" value="Ca2+ activated K+ channels"/>
</dbReference>
<dbReference type="PRO" id="PR:P70606"/>
<dbReference type="Proteomes" id="UP000002494">
    <property type="component" value="Chromosome 16"/>
</dbReference>
<dbReference type="Bgee" id="ENSRNOG00000029264">
    <property type="expression patterns" value="Expressed in frontal cortex and 16 other cell types or tissues"/>
</dbReference>
<dbReference type="ExpressionAtlas" id="P70606">
    <property type="expression patterns" value="baseline and differential"/>
</dbReference>
<dbReference type="GO" id="GO:0005737">
    <property type="term" value="C:cytoplasm"/>
    <property type="evidence" value="ECO:0000266"/>
    <property type="project" value="RGD"/>
</dbReference>
<dbReference type="GO" id="GO:0043005">
    <property type="term" value="C:neuron projection"/>
    <property type="evidence" value="ECO:0000318"/>
    <property type="project" value="GO_Central"/>
</dbReference>
<dbReference type="GO" id="GO:0043025">
    <property type="term" value="C:neuronal cell body"/>
    <property type="evidence" value="ECO:0000314"/>
    <property type="project" value="RGD"/>
</dbReference>
<dbReference type="GO" id="GO:0005886">
    <property type="term" value="C:plasma membrane"/>
    <property type="evidence" value="ECO:0000266"/>
    <property type="project" value="RGD"/>
</dbReference>
<dbReference type="GO" id="GO:0030018">
    <property type="term" value="C:Z disc"/>
    <property type="evidence" value="ECO:0007669"/>
    <property type="project" value="UniProtKB-SubCell"/>
</dbReference>
<dbReference type="GO" id="GO:0005516">
    <property type="term" value="F:calmodulin binding"/>
    <property type="evidence" value="ECO:0000266"/>
    <property type="project" value="RGD"/>
</dbReference>
<dbReference type="GO" id="GO:0005242">
    <property type="term" value="F:inward rectifier potassium channel activity"/>
    <property type="evidence" value="ECO:0000266"/>
    <property type="project" value="RGD"/>
</dbReference>
<dbReference type="GO" id="GO:0044877">
    <property type="term" value="F:protein-containing complex binding"/>
    <property type="evidence" value="ECO:0000315"/>
    <property type="project" value="RGD"/>
</dbReference>
<dbReference type="GO" id="GO:0016286">
    <property type="term" value="F:small conductance calcium-activated potassium channel activity"/>
    <property type="evidence" value="ECO:0000315"/>
    <property type="project" value="RGD"/>
</dbReference>
<dbReference type="GO" id="GO:0071805">
    <property type="term" value="P:potassium ion transmembrane transport"/>
    <property type="evidence" value="ECO:0000266"/>
    <property type="project" value="RGD"/>
</dbReference>
<dbReference type="FunFam" id="1.10.287.70:FF:000022">
    <property type="entry name" value="Small conductance calcium-activated potassium channel, isoform O"/>
    <property type="match status" value="1"/>
</dbReference>
<dbReference type="FunFam" id="1.10.287.70:FF:000027">
    <property type="entry name" value="Small conductance calcium-activated potassium channel, isoform O"/>
    <property type="match status" value="1"/>
</dbReference>
<dbReference type="Gene3D" id="1.10.287.70">
    <property type="match status" value="2"/>
</dbReference>
<dbReference type="InterPro" id="IPR004178">
    <property type="entry name" value="CaM-bd_dom"/>
</dbReference>
<dbReference type="InterPro" id="IPR036122">
    <property type="entry name" value="CaM-bd_dom_sf"/>
</dbReference>
<dbReference type="InterPro" id="IPR015449">
    <property type="entry name" value="K_chnl_Ca-activ_SK"/>
</dbReference>
<dbReference type="InterPro" id="IPR013099">
    <property type="entry name" value="K_chnl_dom"/>
</dbReference>
<dbReference type="PANTHER" id="PTHR10153">
    <property type="entry name" value="SMALL CONDUCTANCE CALCIUM-ACTIVATED POTASSIUM CHANNEL"/>
    <property type="match status" value="1"/>
</dbReference>
<dbReference type="Pfam" id="PF02888">
    <property type="entry name" value="CaMBD"/>
    <property type="match status" value="1"/>
</dbReference>
<dbReference type="Pfam" id="PF07885">
    <property type="entry name" value="Ion_trans_2"/>
    <property type="match status" value="1"/>
</dbReference>
<dbReference type="Pfam" id="PF03530">
    <property type="entry name" value="SK_channel"/>
    <property type="match status" value="1"/>
</dbReference>
<dbReference type="PRINTS" id="PR01451">
    <property type="entry name" value="SKCHANNEL"/>
</dbReference>
<dbReference type="SMART" id="SM01053">
    <property type="entry name" value="CaMBD"/>
    <property type="match status" value="1"/>
</dbReference>
<dbReference type="SUPFAM" id="SSF81327">
    <property type="entry name" value="Small-conductance potassium channel"/>
    <property type="match status" value="1"/>
</dbReference>
<dbReference type="SUPFAM" id="SSF81324">
    <property type="entry name" value="Voltage-gated potassium channels"/>
    <property type="match status" value="1"/>
</dbReference>
<name>KCNN1_RAT</name>
<evidence type="ECO:0000250" key="1"/>
<evidence type="ECO:0000250" key="2">
    <source>
        <dbReference type="UniProtKB" id="P70604"/>
    </source>
</evidence>
<evidence type="ECO:0000250" key="3">
    <source>
        <dbReference type="UniProtKB" id="Q92952"/>
    </source>
</evidence>
<evidence type="ECO:0000250" key="4">
    <source>
        <dbReference type="UniProtKB" id="Q9EQR3"/>
    </source>
</evidence>
<evidence type="ECO:0000255" key="5"/>
<evidence type="ECO:0000256" key="6">
    <source>
        <dbReference type="SAM" id="MobiDB-lite"/>
    </source>
</evidence>
<evidence type="ECO:0000269" key="7">
    <source>
    </source>
</evidence>
<evidence type="ECO:0000305" key="8"/>
<evidence type="ECO:0000312" key="9">
    <source>
        <dbReference type="RGD" id="2962"/>
    </source>
</evidence>
<gene>
    <name evidence="9" type="primary">Kcnn1</name>
    <name type="synonym">Sk1</name>
</gene>
<feature type="chain" id="PRO_0000155009" description="Small conductance calcium-activated potassium channel protein 1">
    <location>
        <begin position="1"/>
        <end position="536"/>
    </location>
</feature>
<feature type="transmembrane region" description="Helical; Name=Segment S1" evidence="5">
    <location>
        <begin position="107"/>
        <end position="127"/>
    </location>
</feature>
<feature type="transmembrane region" description="Helical; Name=Segment S2" evidence="5">
    <location>
        <begin position="136"/>
        <end position="156"/>
    </location>
</feature>
<feature type="transmembrane region" description="Helical; Name=Segment S3" evidence="5">
    <location>
        <begin position="224"/>
        <end position="244"/>
    </location>
</feature>
<feature type="transmembrane region" description="Helical; Name=Segment S4" evidence="5">
    <location>
        <begin position="273"/>
        <end position="293"/>
    </location>
</feature>
<feature type="transmembrane region" description="Helical; Name=Segment S5" evidence="5">
    <location>
        <begin position="313"/>
        <end position="333"/>
    </location>
</feature>
<feature type="intramembrane region" description="Pore-forming; Name=Segment H5" evidence="5">
    <location>
        <begin position="342"/>
        <end position="362"/>
    </location>
</feature>
<feature type="transmembrane region" description="Helical; Name=Segment S6" evidence="5">
    <location>
        <begin position="487"/>
        <end position="507"/>
    </location>
</feature>
<feature type="region of interest" description="Disordered" evidence="6">
    <location>
        <begin position="1"/>
        <end position="90"/>
    </location>
</feature>
<feature type="region of interest" description="Calmodulin-binding" evidence="1">
    <location>
        <begin position="380"/>
        <end position="459"/>
    </location>
</feature>
<feature type="region of interest" description="Disordered" evidence="6">
    <location>
        <begin position="514"/>
        <end position="536"/>
    </location>
</feature>
<feature type="compositionally biased region" description="Acidic residues" evidence="6">
    <location>
        <begin position="65"/>
        <end position="75"/>
    </location>
</feature>
<feature type="compositionally biased region" description="Polar residues" evidence="6">
    <location>
        <begin position="515"/>
        <end position="536"/>
    </location>
</feature>
<organism>
    <name type="scientific">Rattus norvegicus</name>
    <name type="common">Rat</name>
    <dbReference type="NCBI Taxonomy" id="10116"/>
    <lineage>
        <taxon>Eukaryota</taxon>
        <taxon>Metazoa</taxon>
        <taxon>Chordata</taxon>
        <taxon>Craniata</taxon>
        <taxon>Vertebrata</taxon>
        <taxon>Euteleostomi</taxon>
        <taxon>Mammalia</taxon>
        <taxon>Eutheria</taxon>
        <taxon>Euarchontoglires</taxon>
        <taxon>Glires</taxon>
        <taxon>Rodentia</taxon>
        <taxon>Myomorpha</taxon>
        <taxon>Muroidea</taxon>
        <taxon>Muridae</taxon>
        <taxon>Murinae</taxon>
        <taxon>Rattus</taxon>
    </lineage>
</organism>
<proteinExistence type="evidence at protein level"/>
<accession>P70606</accession>